<gene>
    <name evidence="1" type="primary">frr</name>
    <name type="ordered locus">Mext_2086</name>
</gene>
<proteinExistence type="inferred from homology"/>
<feature type="chain" id="PRO_1000090757" description="Ribosome-recycling factor">
    <location>
        <begin position="1"/>
        <end position="187"/>
    </location>
</feature>
<name>RRF_METEP</name>
<dbReference type="EMBL" id="CP000908">
    <property type="protein sequence ID" value="ABY30482.1"/>
    <property type="molecule type" value="Genomic_DNA"/>
</dbReference>
<dbReference type="RefSeq" id="WP_003598054.1">
    <property type="nucleotide sequence ID" value="NC_010172.1"/>
</dbReference>
<dbReference type="SMR" id="A9W4H6"/>
<dbReference type="GeneID" id="72989773"/>
<dbReference type="KEGG" id="mex:Mext_2086"/>
<dbReference type="eggNOG" id="COG0233">
    <property type="taxonomic scope" value="Bacteria"/>
</dbReference>
<dbReference type="HOGENOM" id="CLU_073981_2_0_5"/>
<dbReference type="BioCyc" id="MEXT419610:MEXT_RS10530-MONOMER"/>
<dbReference type="GO" id="GO:0005829">
    <property type="term" value="C:cytosol"/>
    <property type="evidence" value="ECO:0007669"/>
    <property type="project" value="GOC"/>
</dbReference>
<dbReference type="GO" id="GO:0043023">
    <property type="term" value="F:ribosomal large subunit binding"/>
    <property type="evidence" value="ECO:0007669"/>
    <property type="project" value="TreeGrafter"/>
</dbReference>
<dbReference type="GO" id="GO:0002184">
    <property type="term" value="P:cytoplasmic translational termination"/>
    <property type="evidence" value="ECO:0007669"/>
    <property type="project" value="TreeGrafter"/>
</dbReference>
<dbReference type="CDD" id="cd00520">
    <property type="entry name" value="RRF"/>
    <property type="match status" value="1"/>
</dbReference>
<dbReference type="FunFam" id="1.10.132.20:FF:000001">
    <property type="entry name" value="Ribosome-recycling factor"/>
    <property type="match status" value="1"/>
</dbReference>
<dbReference type="FunFam" id="3.30.1360.40:FF:000001">
    <property type="entry name" value="Ribosome-recycling factor"/>
    <property type="match status" value="1"/>
</dbReference>
<dbReference type="Gene3D" id="3.30.1360.40">
    <property type="match status" value="1"/>
</dbReference>
<dbReference type="Gene3D" id="1.10.132.20">
    <property type="entry name" value="Ribosome-recycling factor"/>
    <property type="match status" value="1"/>
</dbReference>
<dbReference type="HAMAP" id="MF_00040">
    <property type="entry name" value="RRF"/>
    <property type="match status" value="1"/>
</dbReference>
<dbReference type="InterPro" id="IPR002661">
    <property type="entry name" value="Ribosome_recyc_fac"/>
</dbReference>
<dbReference type="InterPro" id="IPR023584">
    <property type="entry name" value="Ribosome_recyc_fac_dom"/>
</dbReference>
<dbReference type="InterPro" id="IPR036191">
    <property type="entry name" value="RRF_sf"/>
</dbReference>
<dbReference type="NCBIfam" id="TIGR00496">
    <property type="entry name" value="frr"/>
    <property type="match status" value="1"/>
</dbReference>
<dbReference type="PANTHER" id="PTHR20982:SF3">
    <property type="entry name" value="MITOCHONDRIAL RIBOSOME RECYCLING FACTOR PSEUDO 1"/>
    <property type="match status" value="1"/>
</dbReference>
<dbReference type="PANTHER" id="PTHR20982">
    <property type="entry name" value="RIBOSOME RECYCLING FACTOR"/>
    <property type="match status" value="1"/>
</dbReference>
<dbReference type="Pfam" id="PF01765">
    <property type="entry name" value="RRF"/>
    <property type="match status" value="1"/>
</dbReference>
<dbReference type="SUPFAM" id="SSF55194">
    <property type="entry name" value="Ribosome recycling factor, RRF"/>
    <property type="match status" value="1"/>
</dbReference>
<protein>
    <recommendedName>
        <fullName evidence="1">Ribosome-recycling factor</fullName>
        <shortName evidence="1">RRF</shortName>
    </recommendedName>
    <alternativeName>
        <fullName evidence="1">Ribosome-releasing factor</fullName>
    </alternativeName>
</protein>
<comment type="function">
    <text evidence="1">Responsible for the release of ribosomes from messenger RNA at the termination of protein biosynthesis. May increase the efficiency of translation by recycling ribosomes from one round of translation to another.</text>
</comment>
<comment type="subcellular location">
    <subcellularLocation>
        <location evidence="1">Cytoplasm</location>
    </subcellularLocation>
</comment>
<comment type="similarity">
    <text evidence="1">Belongs to the RRF family.</text>
</comment>
<accession>A9W4H6</accession>
<organism>
    <name type="scientific">Methylorubrum extorquens (strain PA1)</name>
    <name type="common">Methylobacterium extorquens</name>
    <dbReference type="NCBI Taxonomy" id="419610"/>
    <lineage>
        <taxon>Bacteria</taxon>
        <taxon>Pseudomonadati</taxon>
        <taxon>Pseudomonadota</taxon>
        <taxon>Alphaproteobacteria</taxon>
        <taxon>Hyphomicrobiales</taxon>
        <taxon>Methylobacteriaceae</taxon>
        <taxon>Methylorubrum</taxon>
    </lineage>
</organism>
<keyword id="KW-0963">Cytoplasm</keyword>
<keyword id="KW-0648">Protein biosynthesis</keyword>
<sequence length="187" mass="20856">MATPEFDLGDIKRRMQGAVSSLSKDLGSLRTGRATPSLLDPIQVEAYGSSMPMAQVATVSVPEPRLLSISVWDRSMVTNVEKAIRESDLGLNPMTEGQTIRLRIPEMNEQRRKEMVKVAHKYTEEARVAVRHVRRDGLDILKKLEKDGAISQDDEKRQAAEVQKATDDAINEIDGVLASKEKEIMQV</sequence>
<evidence type="ECO:0000255" key="1">
    <source>
        <dbReference type="HAMAP-Rule" id="MF_00040"/>
    </source>
</evidence>
<reference key="1">
    <citation type="submission" date="2007-12" db="EMBL/GenBank/DDBJ databases">
        <title>Complete sequence of Methylobacterium extorquens PA1.</title>
        <authorList>
            <consortium name="US DOE Joint Genome Institute"/>
            <person name="Copeland A."/>
            <person name="Lucas S."/>
            <person name="Lapidus A."/>
            <person name="Barry K."/>
            <person name="Glavina del Rio T."/>
            <person name="Dalin E."/>
            <person name="Tice H."/>
            <person name="Pitluck S."/>
            <person name="Saunders E."/>
            <person name="Brettin T."/>
            <person name="Bruce D."/>
            <person name="Detter J.C."/>
            <person name="Han C."/>
            <person name="Schmutz J."/>
            <person name="Larimer F."/>
            <person name="Land M."/>
            <person name="Hauser L."/>
            <person name="Kyrpides N."/>
            <person name="Kim E."/>
            <person name="Marx C."/>
            <person name="Richardson P."/>
        </authorList>
    </citation>
    <scope>NUCLEOTIDE SEQUENCE [LARGE SCALE GENOMIC DNA]</scope>
    <source>
        <strain>PA1</strain>
    </source>
</reference>